<proteinExistence type="evidence at protein level"/>
<feature type="chain" id="PRO_0000382774" description="Uncharacterized Golgi apparatus protein ECU07_0400">
    <location>
        <begin position="1"/>
        <end position="208"/>
    </location>
</feature>
<feature type="region of interest" description="Disordered" evidence="1">
    <location>
        <begin position="124"/>
        <end position="208"/>
    </location>
</feature>
<feature type="compositionally biased region" description="Basic and acidic residues" evidence="1">
    <location>
        <begin position="133"/>
        <end position="170"/>
    </location>
</feature>
<organism>
    <name type="scientific">Encephalitozoon cuniculi (strain GB-M1)</name>
    <name type="common">Microsporidian parasite</name>
    <dbReference type="NCBI Taxonomy" id="284813"/>
    <lineage>
        <taxon>Eukaryota</taxon>
        <taxon>Fungi</taxon>
        <taxon>Fungi incertae sedis</taxon>
        <taxon>Microsporidia</taxon>
        <taxon>Unikaryonidae</taxon>
        <taxon>Encephalitozoon</taxon>
    </lineage>
</organism>
<keyword id="KW-0333">Golgi apparatus</keyword>
<keyword id="KW-1185">Reference proteome</keyword>
<dbReference type="EMBL" id="AL590447">
    <property type="protein sequence ID" value="CAD25572.1"/>
    <property type="molecule type" value="Genomic_DNA"/>
</dbReference>
<dbReference type="RefSeq" id="NP_585968.1">
    <property type="nucleotide sequence ID" value="NM_001041590.1"/>
</dbReference>
<dbReference type="GeneID" id="859397"/>
<dbReference type="KEGG" id="ecu:ECU07_0400"/>
<dbReference type="VEuPathDB" id="MicrosporidiaDB:ECU07_0400"/>
<dbReference type="HOGENOM" id="CLU_089362_0_0_1"/>
<dbReference type="InParanoid" id="Q8SV33"/>
<dbReference type="OrthoDB" id="2191300at2759"/>
<dbReference type="Proteomes" id="UP000000819">
    <property type="component" value="Chromosome VII"/>
</dbReference>
<dbReference type="GO" id="GO:0005794">
    <property type="term" value="C:Golgi apparatus"/>
    <property type="evidence" value="ECO:0007669"/>
    <property type="project" value="UniProtKB-SubCell"/>
</dbReference>
<gene>
    <name type="ordered locus">ECU07_0400</name>
</gene>
<comment type="subcellular location">
    <subcellularLocation>
        <location evidence="2">Golgi apparatus</location>
    </subcellularLocation>
</comment>
<comment type="developmental stage">
    <text evidence="2">Expressed in late sporogonial stages.</text>
</comment>
<sequence length="208" mass="22811">MKFSTLKLATCYLYKVAAEAKVAGKEEFVGDSDSNYQNEYLVTRTTGKDTFTPEMTRKMVLENGLAIVRETTTYVNPYEVKFVPGPVLESLDKVAFASERFGAPNKFIPKPDFSYMEGYNKMAKKTGSSNARTPDEGKKAKNAPEEEKVKTSGSEDAKGEESAVEGKEPEQGENDVEVANPTKSSEKAGFFPNGSFARPSFGKYSSLA</sequence>
<reference key="1">
    <citation type="journal article" date="2001" name="Nature">
        <title>Genome sequence and gene compaction of the eukaryote parasite Encephalitozoon cuniculi.</title>
        <authorList>
            <person name="Katinka M.D."/>
            <person name="Duprat S."/>
            <person name="Cornillot E."/>
            <person name="Metenier G."/>
            <person name="Thomarat F."/>
            <person name="Prensier G."/>
            <person name="Barbe V."/>
            <person name="Peyretaillade E."/>
            <person name="Brottier P."/>
            <person name="Wincker P."/>
            <person name="Delbac F."/>
            <person name="El Alaoui H."/>
            <person name="Peyret P."/>
            <person name="Saurin W."/>
            <person name="Gouy M."/>
            <person name="Weissenbach J."/>
            <person name="Vivares C.P."/>
        </authorList>
    </citation>
    <scope>NUCLEOTIDE SEQUENCE [LARGE SCALE GENOMIC DNA]</scope>
    <source>
        <strain>GB-M1</strain>
    </source>
</reference>
<reference key="2">
    <citation type="journal article" date="2006" name="Proteomics">
        <title>Proteomic analysis of the eukaryotic parasite Encephalitozoon cuniculi (microsporidia): a reference map for proteins expressed in late sporogonial stages.</title>
        <authorList>
            <person name="Brosson D."/>
            <person name="Kuhn L."/>
            <person name="Delbac F."/>
            <person name="Garin J."/>
            <person name="Vivares C.P."/>
            <person name="Texier C."/>
        </authorList>
    </citation>
    <scope>IDENTIFICATION BY MASS SPECTROMETRY [LARGE SCALE ANALYSIS]</scope>
    <scope>DEVELOPMENTAL STAGE</scope>
    <scope>SUBCELLULAR LOCATION</scope>
</reference>
<name>Y740_ENCCU</name>
<protein>
    <recommendedName>
        <fullName>Uncharacterized Golgi apparatus protein ECU07_0400</fullName>
    </recommendedName>
</protein>
<evidence type="ECO:0000256" key="1">
    <source>
        <dbReference type="SAM" id="MobiDB-lite"/>
    </source>
</evidence>
<evidence type="ECO:0000269" key="2">
    <source>
    </source>
</evidence>
<accession>Q8SV33</accession>